<reference key="1">
    <citation type="journal article" date="2002" name="Science">
        <title>50 million years of genomic stasis in endosymbiotic bacteria.</title>
        <authorList>
            <person name="Tamas I."/>
            <person name="Klasson L."/>
            <person name="Canbaeck B."/>
            <person name="Naeslund A.K."/>
            <person name="Eriksson A.-S."/>
            <person name="Wernegreen J.J."/>
            <person name="Sandstroem J.P."/>
            <person name="Moran N.A."/>
            <person name="Andersson S.G.E."/>
        </authorList>
    </citation>
    <scope>NUCLEOTIDE SEQUENCE [LARGE SCALE GENOMIC DNA]</scope>
    <source>
        <strain>Sg</strain>
    </source>
</reference>
<organism>
    <name type="scientific">Buchnera aphidicola subsp. Schizaphis graminum (strain Sg)</name>
    <dbReference type="NCBI Taxonomy" id="198804"/>
    <lineage>
        <taxon>Bacteria</taxon>
        <taxon>Pseudomonadati</taxon>
        <taxon>Pseudomonadota</taxon>
        <taxon>Gammaproteobacteria</taxon>
        <taxon>Enterobacterales</taxon>
        <taxon>Erwiniaceae</taxon>
        <taxon>Buchnera</taxon>
    </lineage>
</organism>
<name>PUR8_BUCAP</name>
<gene>
    <name type="primary">purB</name>
    <name type="ordered locus">BUsg_253</name>
</gene>
<accession>Q8K9Q7</accession>
<evidence type="ECO:0000250" key="1"/>
<evidence type="ECO:0000250" key="2">
    <source>
        <dbReference type="UniProtKB" id="P0AB89"/>
    </source>
</evidence>
<evidence type="ECO:0000305" key="3"/>
<feature type="chain" id="PRO_0000137875" description="Adenylosuccinate lyase">
    <location>
        <begin position="1"/>
        <end position="456"/>
    </location>
</feature>
<feature type="active site" description="Proton donor/acceptor" evidence="2">
    <location>
        <position position="171"/>
    </location>
</feature>
<feature type="active site" description="Proton donor/acceptor" evidence="2">
    <location>
        <position position="295"/>
    </location>
</feature>
<feature type="binding site" evidence="2">
    <location>
        <begin position="15"/>
        <end position="16"/>
    </location>
    <ligand>
        <name>N(6)-(1,2-dicarboxyethyl)-AMP</name>
        <dbReference type="ChEBI" id="CHEBI:57567"/>
    </ligand>
</feature>
<feature type="binding site" evidence="2">
    <location>
        <begin position="90"/>
        <end position="92"/>
    </location>
    <ligand>
        <name>N(6)-(1,2-dicarboxyethyl)-AMP</name>
        <dbReference type="ChEBI" id="CHEBI:57567"/>
    </ligand>
</feature>
<feature type="binding site" evidence="2">
    <location>
        <begin position="122"/>
        <end position="123"/>
    </location>
    <ligand>
        <name>N(6)-(1,2-dicarboxyethyl)-AMP</name>
        <dbReference type="ChEBI" id="CHEBI:57567"/>
    </ligand>
</feature>
<feature type="binding site" evidence="2">
    <location>
        <position position="247"/>
    </location>
    <ligand>
        <name>N(6)-(1,2-dicarboxyethyl)-AMP</name>
        <dbReference type="ChEBI" id="CHEBI:57567"/>
    </ligand>
</feature>
<feature type="binding site" evidence="2">
    <location>
        <position position="296"/>
    </location>
    <ligand>
        <name>N(6)-(1,2-dicarboxyethyl)-AMP</name>
        <dbReference type="ChEBI" id="CHEBI:57567"/>
    </ligand>
</feature>
<feature type="binding site" evidence="2">
    <location>
        <begin position="301"/>
        <end position="303"/>
    </location>
    <ligand>
        <name>N(6)-(1,2-dicarboxyethyl)-AMP</name>
        <dbReference type="ChEBI" id="CHEBI:57567"/>
    </ligand>
</feature>
<feature type="binding site" evidence="2">
    <location>
        <position position="309"/>
    </location>
    <ligand>
        <name>N(6)-(1,2-dicarboxyethyl)-AMP</name>
        <dbReference type="ChEBI" id="CHEBI:57567"/>
    </ligand>
</feature>
<feature type="binding site" evidence="2">
    <location>
        <position position="335"/>
    </location>
    <ligand>
        <name>N(6)-(1,2-dicarboxyethyl)-AMP</name>
        <dbReference type="ChEBI" id="CHEBI:57567"/>
    </ligand>
</feature>
<feature type="binding site" evidence="2">
    <location>
        <begin position="340"/>
        <end position="344"/>
    </location>
    <ligand>
        <name>N(6)-(1,2-dicarboxyethyl)-AMP</name>
        <dbReference type="ChEBI" id="CHEBI:57567"/>
    </ligand>
</feature>
<dbReference type="EC" id="4.3.2.2" evidence="2"/>
<dbReference type="EMBL" id="AE013218">
    <property type="protein sequence ID" value="AAM67812.1"/>
    <property type="molecule type" value="Genomic_DNA"/>
</dbReference>
<dbReference type="RefSeq" id="WP_011053779.1">
    <property type="nucleotide sequence ID" value="NC_004061.1"/>
</dbReference>
<dbReference type="SMR" id="Q8K9Q7"/>
<dbReference type="STRING" id="198804.BUsg_253"/>
<dbReference type="GeneID" id="93003723"/>
<dbReference type="KEGG" id="bas:BUsg_253"/>
<dbReference type="eggNOG" id="COG0015">
    <property type="taxonomic scope" value="Bacteria"/>
</dbReference>
<dbReference type="HOGENOM" id="CLU_025566_2_0_6"/>
<dbReference type="UniPathway" id="UPA00074">
    <property type="reaction ID" value="UER00132"/>
</dbReference>
<dbReference type="UniPathway" id="UPA00075">
    <property type="reaction ID" value="UER00336"/>
</dbReference>
<dbReference type="Proteomes" id="UP000000416">
    <property type="component" value="Chromosome"/>
</dbReference>
<dbReference type="GO" id="GO:0005829">
    <property type="term" value="C:cytosol"/>
    <property type="evidence" value="ECO:0007669"/>
    <property type="project" value="TreeGrafter"/>
</dbReference>
<dbReference type="GO" id="GO:0070626">
    <property type="term" value="F:(S)-2-(5-amino-1-(5-phospho-D-ribosyl)imidazole-4-carboxamido) succinate lyase (fumarate-forming) activity"/>
    <property type="evidence" value="ECO:0007669"/>
    <property type="project" value="RHEA"/>
</dbReference>
<dbReference type="GO" id="GO:0004018">
    <property type="term" value="F:N6-(1,2-dicarboxyethyl)AMP AMP-lyase (fumarate-forming) activity"/>
    <property type="evidence" value="ECO:0007669"/>
    <property type="project" value="InterPro"/>
</dbReference>
<dbReference type="GO" id="GO:0044208">
    <property type="term" value="P:'de novo' AMP biosynthetic process"/>
    <property type="evidence" value="ECO:0007669"/>
    <property type="project" value="UniProtKB-UniPathway"/>
</dbReference>
<dbReference type="GO" id="GO:0006189">
    <property type="term" value="P:'de novo' IMP biosynthetic process"/>
    <property type="evidence" value="ECO:0007669"/>
    <property type="project" value="UniProtKB-UniPathway"/>
</dbReference>
<dbReference type="CDD" id="cd01598">
    <property type="entry name" value="PurB"/>
    <property type="match status" value="1"/>
</dbReference>
<dbReference type="FunFam" id="1.20.200.10:FF:000004">
    <property type="entry name" value="Adenylosuccinate lyase"/>
    <property type="match status" value="1"/>
</dbReference>
<dbReference type="Gene3D" id="1.10.40.30">
    <property type="entry name" value="Fumarase/aspartase (C-terminal domain)"/>
    <property type="match status" value="1"/>
</dbReference>
<dbReference type="Gene3D" id="1.20.200.10">
    <property type="entry name" value="Fumarase/aspartase (Central domain)"/>
    <property type="match status" value="1"/>
</dbReference>
<dbReference type="Gene3D" id="1.10.275.10">
    <property type="entry name" value="Fumarase/aspartase (N-terminal domain)"/>
    <property type="match status" value="1"/>
</dbReference>
<dbReference type="InterPro" id="IPR024083">
    <property type="entry name" value="Fumarase/histidase_N"/>
</dbReference>
<dbReference type="InterPro" id="IPR020557">
    <property type="entry name" value="Fumarate_lyase_CS"/>
</dbReference>
<dbReference type="InterPro" id="IPR000362">
    <property type="entry name" value="Fumarate_lyase_fam"/>
</dbReference>
<dbReference type="InterPro" id="IPR022761">
    <property type="entry name" value="Fumarate_lyase_N"/>
</dbReference>
<dbReference type="InterPro" id="IPR008948">
    <property type="entry name" value="L-Aspartase-like"/>
</dbReference>
<dbReference type="InterPro" id="IPR004769">
    <property type="entry name" value="Pur_lyase"/>
</dbReference>
<dbReference type="InterPro" id="IPR047136">
    <property type="entry name" value="PurB_bact"/>
</dbReference>
<dbReference type="InterPro" id="IPR013539">
    <property type="entry name" value="PurB_C"/>
</dbReference>
<dbReference type="NCBIfam" id="NF006764">
    <property type="entry name" value="PRK09285.1"/>
    <property type="match status" value="1"/>
</dbReference>
<dbReference type="NCBIfam" id="TIGR00928">
    <property type="entry name" value="purB"/>
    <property type="match status" value="1"/>
</dbReference>
<dbReference type="PANTHER" id="PTHR43411">
    <property type="entry name" value="ADENYLOSUCCINATE LYASE"/>
    <property type="match status" value="1"/>
</dbReference>
<dbReference type="PANTHER" id="PTHR43411:SF1">
    <property type="entry name" value="ADENYLOSUCCINATE LYASE"/>
    <property type="match status" value="1"/>
</dbReference>
<dbReference type="Pfam" id="PF08328">
    <property type="entry name" value="ASL_C"/>
    <property type="match status" value="1"/>
</dbReference>
<dbReference type="Pfam" id="PF00206">
    <property type="entry name" value="Lyase_1"/>
    <property type="match status" value="1"/>
</dbReference>
<dbReference type="PRINTS" id="PR00149">
    <property type="entry name" value="FUMRATELYASE"/>
</dbReference>
<dbReference type="SUPFAM" id="SSF48557">
    <property type="entry name" value="L-aspartase-like"/>
    <property type="match status" value="1"/>
</dbReference>
<dbReference type="PROSITE" id="PS00163">
    <property type="entry name" value="FUMARATE_LYASES"/>
    <property type="match status" value="1"/>
</dbReference>
<protein>
    <recommendedName>
        <fullName>Adenylosuccinate lyase</fullName>
        <shortName>ASL</shortName>
        <ecNumber evidence="2">4.3.2.2</ecNumber>
    </recommendedName>
    <alternativeName>
        <fullName>Adenylosuccinase</fullName>
        <shortName>ASase</shortName>
    </alternativeName>
</protein>
<sequence>MELNSLTAISPIDGRYSNSTKLLRNIFSEFGFLKYRLYVEIQWLKKLINMHQILEIKKVEKTDILFLDNIFETFNEEDAISVKNIEKETNHDVKALEYFLRKKLSQSKKLSPFLEFVHFLCTSEDINNIAYALMIKNARDEIILPLWKKIINFLKNASFQYRNNSLLSLTHGQPATPSTMGKEMVNFYYRMQRQYHKLKKIEILGKINGTTGNYNAHLVAYPKVNWHAVSKEFITSLGIFWNPYTTQIEPHDYIAELFGCVSLFNNILIDSNRDIWGYISLNYFKQKLIDQEIGSSIMPHKINPIDFENSEGNLGLSNALMNHMINKLPISRWQRDLSDSTVLRNIGVVFAYSIIAYNSVLLGTNKLTINTSQLLKNLDNNWSVLSEAIQTVMRRYTIENAYEKLKKLTRGKKIEKVDIHKFIDKLNIPKIEKERLKKISPSNYIGAASQIIDEIK</sequence>
<proteinExistence type="inferred from homology"/>
<keyword id="KW-0456">Lyase</keyword>
<keyword id="KW-0658">Purine biosynthesis</keyword>
<comment type="function">
    <text evidence="2">Catalyzes two reactions in de novo purine nucleotide biosynthesis. Catalyzes the breakdown of 5-aminoimidazole- (N-succinylocarboxamide) ribotide (SAICAR or 2-[5-amino-1-(5-phospho-beta-D-ribosyl)imidazole-4-carboxamido]succinate) to 5-aminoimidazole-4-carboxamide ribotide (AICAR or 5-amino-1-(5-phospho-beta-D-ribosyl)imidazole-4-carboxamide) and fumarate, and of adenylosuccinate (ADS or N(6)-(1,2-dicarboxyethyl)-AMP) to adenosine monophosphate (AMP) and fumarate.</text>
</comment>
<comment type="catalytic activity">
    <reaction evidence="2">
        <text>N(6)-(1,2-dicarboxyethyl)-AMP = fumarate + AMP</text>
        <dbReference type="Rhea" id="RHEA:16853"/>
        <dbReference type="ChEBI" id="CHEBI:29806"/>
        <dbReference type="ChEBI" id="CHEBI:57567"/>
        <dbReference type="ChEBI" id="CHEBI:456215"/>
        <dbReference type="EC" id="4.3.2.2"/>
    </reaction>
    <physiologicalReaction direction="left-to-right" evidence="2">
        <dbReference type="Rhea" id="RHEA:16854"/>
    </physiologicalReaction>
</comment>
<comment type="catalytic activity">
    <reaction evidence="2">
        <text>(2S)-2-[5-amino-1-(5-phospho-beta-D-ribosyl)imidazole-4-carboxamido]succinate = 5-amino-1-(5-phospho-beta-D-ribosyl)imidazole-4-carboxamide + fumarate</text>
        <dbReference type="Rhea" id="RHEA:23920"/>
        <dbReference type="ChEBI" id="CHEBI:29806"/>
        <dbReference type="ChEBI" id="CHEBI:58443"/>
        <dbReference type="ChEBI" id="CHEBI:58475"/>
        <dbReference type="EC" id="4.3.2.2"/>
    </reaction>
    <physiologicalReaction direction="left-to-right" evidence="2">
        <dbReference type="Rhea" id="RHEA:23921"/>
    </physiologicalReaction>
</comment>
<comment type="pathway">
    <text>Purine metabolism; AMP biosynthesis via de novo pathway; AMP from IMP: step 2/2.</text>
</comment>
<comment type="pathway">
    <text>Purine metabolism; IMP biosynthesis via de novo pathway; 5-amino-1-(5-phospho-D-ribosyl)imidazole-4-carboxamide from 5-amino-1-(5-phospho-D-ribosyl)imidazole-4-carboxylate: step 2/2.</text>
</comment>
<comment type="subunit">
    <text evidence="1">Homotetramer. Residues from neighboring subunits contribute catalytic and substrate-binding residues to each active site (By similarity).</text>
</comment>
<comment type="similarity">
    <text evidence="3">Belongs to the lyase 1 family. Adenylosuccinate lyase subfamily.</text>
</comment>